<organism>
    <name type="scientific">Pyricularia oryzae (strain 70-15 / ATCC MYA-4617 / FGSC 8958)</name>
    <name type="common">Rice blast fungus</name>
    <name type="synonym">Magnaporthe oryzae</name>
    <dbReference type="NCBI Taxonomy" id="242507"/>
    <lineage>
        <taxon>Eukaryota</taxon>
        <taxon>Fungi</taxon>
        <taxon>Dikarya</taxon>
        <taxon>Ascomycota</taxon>
        <taxon>Pezizomycotina</taxon>
        <taxon>Sordariomycetes</taxon>
        <taxon>Sordariomycetidae</taxon>
        <taxon>Magnaporthales</taxon>
        <taxon>Pyriculariaceae</taxon>
        <taxon>Pyricularia</taxon>
    </lineage>
</organism>
<feature type="chain" id="PRO_0000365832" description="Probable lysosomal cobalamin transporter">
    <location>
        <begin position="1"/>
        <end position="586"/>
    </location>
</feature>
<feature type="transmembrane region" description="Helical" evidence="2">
    <location>
        <begin position="10"/>
        <end position="30"/>
    </location>
</feature>
<feature type="transmembrane region" description="Helical" evidence="2">
    <location>
        <begin position="47"/>
        <end position="67"/>
    </location>
</feature>
<feature type="transmembrane region" description="Helical" evidence="2">
    <location>
        <begin position="96"/>
        <end position="116"/>
    </location>
</feature>
<feature type="transmembrane region" description="Helical" evidence="2">
    <location>
        <begin position="147"/>
        <end position="167"/>
    </location>
</feature>
<feature type="transmembrane region" description="Helical" evidence="2">
    <location>
        <begin position="191"/>
        <end position="211"/>
    </location>
</feature>
<feature type="transmembrane region" description="Helical" evidence="2">
    <location>
        <begin position="315"/>
        <end position="335"/>
    </location>
</feature>
<feature type="transmembrane region" description="Helical" evidence="2">
    <location>
        <begin position="378"/>
        <end position="398"/>
    </location>
</feature>
<feature type="transmembrane region" description="Helical" evidence="2">
    <location>
        <begin position="420"/>
        <end position="440"/>
    </location>
</feature>
<feature type="transmembrane region" description="Helical" evidence="2">
    <location>
        <begin position="509"/>
        <end position="529"/>
    </location>
</feature>
<feature type="glycosylation site" description="N-linked (GlcNAc...) asparagine" evidence="2">
    <location>
        <position position="540"/>
    </location>
</feature>
<comment type="function">
    <text evidence="1">Probable lysosomal cobalamin transporter. Required to export cobalamin from lysosomes allowing its conversion to cofactors (By similarity).</text>
</comment>
<comment type="subcellular location">
    <subcellularLocation>
        <location evidence="1">Lysosome membrane</location>
        <topology evidence="1">Multi-pass membrane protein</topology>
    </subcellularLocation>
</comment>
<comment type="similarity">
    <text evidence="3">Belongs to the LIMR family. LMBRD1 subfamily.</text>
</comment>
<gene>
    <name type="ORF">MGG_00740</name>
</gene>
<keyword id="KW-0846">Cobalamin</keyword>
<keyword id="KW-0170">Cobalt</keyword>
<keyword id="KW-0325">Glycoprotein</keyword>
<keyword id="KW-0458">Lysosome</keyword>
<keyword id="KW-0472">Membrane</keyword>
<keyword id="KW-1185">Reference proteome</keyword>
<keyword id="KW-0812">Transmembrane</keyword>
<keyword id="KW-1133">Transmembrane helix</keyword>
<keyword id="KW-0813">Transport</keyword>
<protein>
    <recommendedName>
        <fullName>Probable lysosomal cobalamin transporter</fullName>
    </recommendedName>
</protein>
<sequence length="586" mass="64887">MAPYLQTSLIWIAYAVAVGLALFAAIVTTFTWQKPRERSAVVNTVAVVSLTSLLATVLLLPVDIALVSSTGSVHLGVNKEWATPEHVAGMLRTLQIVYYSLYSLDALLCLIVIPFAYFWYEEYDEVEEEEGTRSTGAKLWGAFKYTSGFIILVLILFFVGFFVPAAGNQKGGHLDLDYFKRLLAANKGEKALTFAVGLLVCLGTLLYVLYTSSGLALLPISFIKSAPSISAPQLSETTASALERNRERQRQLELRNGGNHDEMPSKDRRELESLVREERTLVRRARLAAEAQGEGRSWVYRTWTKICAVFRPLKLVGGILLLLVSVIVWVSMLITTIDKASNSLCKGHCGYILGQIKIFQPVNWLFLQAAKAFPVDYIIMAFLVLFFFSSSISGLATVGIRFLWVQIFQIRRGRTAPQAILIATVMMALIILGINYSIAMMAAPQYSIYGTQTFCTAEPTAHGKQPDCSEHPEMVRPCSEGFKQPLAKDICTPSVMSTFLNRVTLNWPVFGAVDFWAQVAFLAVFLIVLVTSLFRTPKLNMSELDEEAEADEEEGLLASTGRRFGATWQDITGRSGQASNQENGDN</sequence>
<evidence type="ECO:0000250" key="1"/>
<evidence type="ECO:0000255" key="2"/>
<evidence type="ECO:0000305" key="3"/>
<proteinExistence type="inferred from homology"/>
<reference key="1">
    <citation type="journal article" date="2005" name="Nature">
        <title>The genome sequence of the rice blast fungus Magnaporthe grisea.</title>
        <authorList>
            <person name="Dean R.A."/>
            <person name="Talbot N.J."/>
            <person name="Ebbole D.J."/>
            <person name="Farman M.L."/>
            <person name="Mitchell T.K."/>
            <person name="Orbach M.J."/>
            <person name="Thon M.R."/>
            <person name="Kulkarni R."/>
            <person name="Xu J.-R."/>
            <person name="Pan H."/>
            <person name="Read N.D."/>
            <person name="Lee Y.-H."/>
            <person name="Carbone I."/>
            <person name="Brown D."/>
            <person name="Oh Y.Y."/>
            <person name="Donofrio N."/>
            <person name="Jeong J.S."/>
            <person name="Soanes D.M."/>
            <person name="Djonovic S."/>
            <person name="Kolomiets E."/>
            <person name="Rehmeyer C."/>
            <person name="Li W."/>
            <person name="Harding M."/>
            <person name="Kim S."/>
            <person name="Lebrun M.-H."/>
            <person name="Bohnert H."/>
            <person name="Coughlan S."/>
            <person name="Butler J."/>
            <person name="Calvo S.E."/>
            <person name="Ma L.-J."/>
            <person name="Nicol R."/>
            <person name="Purcell S."/>
            <person name="Nusbaum C."/>
            <person name="Galagan J.E."/>
            <person name="Birren B.W."/>
        </authorList>
    </citation>
    <scope>NUCLEOTIDE SEQUENCE [LARGE SCALE GENOMIC DNA]</scope>
    <source>
        <strain>70-15 / ATCC MYA-4617 / FGSC 8958</strain>
    </source>
</reference>
<dbReference type="EMBL" id="CM001235">
    <property type="protein sequence ID" value="EHA48676.1"/>
    <property type="molecule type" value="Genomic_DNA"/>
</dbReference>
<dbReference type="RefSeq" id="XP_003718260.1">
    <property type="nucleotide sequence ID" value="XM_003718212.1"/>
</dbReference>
<dbReference type="SMR" id="A4RE85"/>
<dbReference type="STRING" id="242507.A4RE85"/>
<dbReference type="EnsemblFungi" id="MGG_00740T0">
    <property type="protein sequence ID" value="MGG_00740T0"/>
    <property type="gene ID" value="MGG_00740"/>
</dbReference>
<dbReference type="GeneID" id="2674691"/>
<dbReference type="KEGG" id="mgr:MGG_00740"/>
<dbReference type="VEuPathDB" id="FungiDB:MGG_00740"/>
<dbReference type="eggNOG" id="ENOG502QQ2T">
    <property type="taxonomic scope" value="Eukaryota"/>
</dbReference>
<dbReference type="HOGENOM" id="CLU_028341_1_0_1"/>
<dbReference type="InParanoid" id="A4RE85"/>
<dbReference type="OMA" id="FWAQFVF"/>
<dbReference type="OrthoDB" id="73273at2759"/>
<dbReference type="Proteomes" id="UP000009058">
    <property type="component" value="Chromosome 5"/>
</dbReference>
<dbReference type="GO" id="GO:0005774">
    <property type="term" value="C:vacuolar membrane"/>
    <property type="evidence" value="ECO:0007669"/>
    <property type="project" value="TreeGrafter"/>
</dbReference>
<dbReference type="GO" id="GO:0031419">
    <property type="term" value="F:cobalamin binding"/>
    <property type="evidence" value="ECO:0007669"/>
    <property type="project" value="UniProtKB-KW"/>
</dbReference>
<dbReference type="GO" id="GO:0072665">
    <property type="term" value="P:protein localization to vacuole"/>
    <property type="evidence" value="ECO:0007669"/>
    <property type="project" value="TreeGrafter"/>
</dbReference>
<dbReference type="InterPro" id="IPR050854">
    <property type="entry name" value="LMBD1_LysCbl_Transport"/>
</dbReference>
<dbReference type="InterPro" id="IPR006876">
    <property type="entry name" value="LMBR1-like_membr_prot"/>
</dbReference>
<dbReference type="PANTHER" id="PTHR16130:SF2">
    <property type="entry name" value="LYSOSOMAL COBALAMIN TRANSPORT ESCORT PROTEIN LMBD1"/>
    <property type="match status" value="1"/>
</dbReference>
<dbReference type="PANTHER" id="PTHR16130">
    <property type="entry name" value="LYSOSOMAL COBALAMIN TRANSPORTER-RELATED"/>
    <property type="match status" value="1"/>
</dbReference>
<dbReference type="Pfam" id="PF04791">
    <property type="entry name" value="LMBR1"/>
    <property type="match status" value="1"/>
</dbReference>
<accession>A4RE85</accession>
<accession>G4NEP6</accession>
<name>LMBD1_PYRO7</name>